<comment type="function">
    <text>Probably plays a role in anchoring the complex to other cellular components.</text>
</comment>
<comment type="subunit">
    <text>EF-1 is composed of four subunits: alpha, beta, delta, and gamma.</text>
</comment>
<keyword id="KW-0903">Direct protein sequencing</keyword>
<keyword id="KW-0251">Elongation factor</keyword>
<keyword id="KW-0648">Protein biosynthesis</keyword>
<accession>P12261</accession>
<protein>
    <recommendedName>
        <fullName>Elongation factor 1-gamma</fullName>
        <shortName>EF-1-gamma</shortName>
    </recommendedName>
    <alternativeName>
        <fullName>eEF-1B gamma</fullName>
    </alternativeName>
</protein>
<organism>
    <name type="scientific">Artemia salina</name>
    <name type="common">Brine shrimp</name>
    <dbReference type="NCBI Taxonomy" id="85549"/>
    <lineage>
        <taxon>Eukaryota</taxon>
        <taxon>Metazoa</taxon>
        <taxon>Ecdysozoa</taxon>
        <taxon>Arthropoda</taxon>
        <taxon>Crustacea</taxon>
        <taxon>Branchiopoda</taxon>
        <taxon>Anostraca</taxon>
        <taxon>Artemiidae</taxon>
        <taxon>Artemia</taxon>
    </lineage>
</organism>
<name>EF1G_ARTSA</name>
<reference key="1">
    <citation type="journal article" date="1987" name="FEBS Lett.">
        <title>Primary structure of elongation factor 1 gamma from Artemia.</title>
        <authorList>
            <person name="Maessen G.D.F."/>
            <person name="Amons R."/>
            <person name="Zeelen J.P."/>
            <person name="Moeller W."/>
        </authorList>
    </citation>
    <scope>NUCLEOTIDE SEQUENCE [MRNA]</scope>
    <scope>PARTIAL PROTEIN SEQUENCE</scope>
</reference>
<evidence type="ECO:0000255" key="1">
    <source>
        <dbReference type="PROSITE-ProRule" id="PRU00519"/>
    </source>
</evidence>
<evidence type="ECO:0000256" key="2">
    <source>
        <dbReference type="SAM" id="MobiDB-lite"/>
    </source>
</evidence>
<proteinExistence type="evidence at protein level"/>
<sequence>MVAGKLYTYPENFRAFKALIAAQYSGAKLEIAKSFVFGETNKSDAFLKSFPLGKVPAFESADGHCIAESNAIAYYVANETLRGSSDLEKAQIIQWMTFADTEILPASCTWVFPVLGIMQFNKQATARAKEDIDKALQALDDHLLTRTYLVGERITLADIVVTCTLLHLYQHVLDEAFRKSYVNTNRWFITLINQKQVKAVIGDFKLCEKAGEFDPKKYAEFQAAIGSGEKKKTEKAPKAVKAKPEKKEVPKKEQEEPADAAEEALAAEPKSKDPFDEMPKGTFNMDDFKRFYSNNEETKSIPYFWEKFDKENYSIWYSEYKYQDELAKVYMSCNLITGMFQRIEKMRKQAFASVCVFGEDNDSSISGIWVWRGQDLAFKLSPDWQIDYESYDWKKLDPDAQETKDLVTQYFTWTGTDKQGRKFNQGKIFK</sequence>
<feature type="initiator methionine" description="Removed">
    <location>
        <position position="1"/>
    </location>
</feature>
<feature type="chain" id="PRO_0000208822" description="Elongation factor 1-gamma">
    <location>
        <begin position="2"/>
        <end position="430"/>
    </location>
</feature>
<feature type="domain" description="GST N-terminal">
    <location>
        <begin position="2"/>
        <end position="84"/>
    </location>
</feature>
<feature type="domain" description="GST C-terminal">
    <location>
        <begin position="85"/>
        <end position="213"/>
    </location>
</feature>
<feature type="domain" description="EF-1-gamma C-terminal" evidence="1">
    <location>
        <begin position="271"/>
        <end position="430"/>
    </location>
</feature>
<feature type="region of interest" description="Disordered" evidence="2">
    <location>
        <begin position="232"/>
        <end position="278"/>
    </location>
</feature>
<feature type="compositionally biased region" description="Basic and acidic residues" evidence="2">
    <location>
        <begin position="232"/>
        <end position="255"/>
    </location>
</feature>
<feature type="compositionally biased region" description="Basic and acidic residues" evidence="2">
    <location>
        <begin position="269"/>
        <end position="278"/>
    </location>
</feature>
<dbReference type="EMBL" id="M28020">
    <property type="protein sequence ID" value="AAC83401.1"/>
    <property type="molecule type" value="mRNA"/>
</dbReference>
<dbReference type="SMR" id="P12261"/>
<dbReference type="GO" id="GO:0005737">
    <property type="term" value="C:cytoplasm"/>
    <property type="evidence" value="ECO:0007669"/>
    <property type="project" value="TreeGrafter"/>
</dbReference>
<dbReference type="GO" id="GO:0005634">
    <property type="term" value="C:nucleus"/>
    <property type="evidence" value="ECO:0007669"/>
    <property type="project" value="TreeGrafter"/>
</dbReference>
<dbReference type="GO" id="GO:0003746">
    <property type="term" value="F:translation elongation factor activity"/>
    <property type="evidence" value="ECO:0007669"/>
    <property type="project" value="UniProtKB-KW"/>
</dbReference>
<dbReference type="CDD" id="cd03181">
    <property type="entry name" value="GST_C_EF1Bgamma_like"/>
    <property type="match status" value="1"/>
</dbReference>
<dbReference type="CDD" id="cd03044">
    <property type="entry name" value="GST_N_EF1Bgamma"/>
    <property type="match status" value="1"/>
</dbReference>
<dbReference type="FunFam" id="1.20.1050.10:FF:000006">
    <property type="entry name" value="Elongation factor 1 gamma"/>
    <property type="match status" value="1"/>
</dbReference>
<dbReference type="FunFam" id="3.40.30.10:FF:000233">
    <property type="entry name" value="Elongation factor 1-gamma"/>
    <property type="match status" value="1"/>
</dbReference>
<dbReference type="FunFam" id="3.30.70.1010:FF:000001">
    <property type="entry name" value="Elongation factor 1-gamma 1"/>
    <property type="match status" value="1"/>
</dbReference>
<dbReference type="Gene3D" id="1.20.1050.10">
    <property type="match status" value="1"/>
</dbReference>
<dbReference type="Gene3D" id="3.40.30.10">
    <property type="entry name" value="Glutaredoxin"/>
    <property type="match status" value="1"/>
</dbReference>
<dbReference type="Gene3D" id="3.30.70.1010">
    <property type="entry name" value="Translation elongation factor EF1B, gamma chain, conserved domain"/>
    <property type="match status" value="1"/>
</dbReference>
<dbReference type="InterPro" id="IPR050802">
    <property type="entry name" value="EF-GSTs"/>
</dbReference>
<dbReference type="InterPro" id="IPR001662">
    <property type="entry name" value="EF1B_G_C"/>
</dbReference>
<dbReference type="InterPro" id="IPR036433">
    <property type="entry name" value="EF1B_G_C_sf"/>
</dbReference>
<dbReference type="InterPro" id="IPR010987">
    <property type="entry name" value="Glutathione-S-Trfase_C-like"/>
</dbReference>
<dbReference type="InterPro" id="IPR036282">
    <property type="entry name" value="Glutathione-S-Trfase_C_sf"/>
</dbReference>
<dbReference type="InterPro" id="IPR040079">
    <property type="entry name" value="Glutathione_S-Trfase"/>
</dbReference>
<dbReference type="InterPro" id="IPR004045">
    <property type="entry name" value="Glutathione_S-Trfase_N"/>
</dbReference>
<dbReference type="InterPro" id="IPR004046">
    <property type="entry name" value="GST_C"/>
</dbReference>
<dbReference type="InterPro" id="IPR036249">
    <property type="entry name" value="Thioredoxin-like_sf"/>
</dbReference>
<dbReference type="PANTHER" id="PTHR43986">
    <property type="entry name" value="ELONGATION FACTOR 1-GAMMA"/>
    <property type="match status" value="1"/>
</dbReference>
<dbReference type="PANTHER" id="PTHR43986:SF1">
    <property type="entry name" value="ELONGATION FACTOR 1-GAMMA"/>
    <property type="match status" value="1"/>
</dbReference>
<dbReference type="Pfam" id="PF00647">
    <property type="entry name" value="EF1G"/>
    <property type="match status" value="1"/>
</dbReference>
<dbReference type="Pfam" id="PF00043">
    <property type="entry name" value="GST_C"/>
    <property type="match status" value="1"/>
</dbReference>
<dbReference type="Pfam" id="PF02798">
    <property type="entry name" value="GST_N"/>
    <property type="match status" value="1"/>
</dbReference>
<dbReference type="SFLD" id="SFLDS00019">
    <property type="entry name" value="Glutathione_Transferase_(cytos"/>
    <property type="match status" value="1"/>
</dbReference>
<dbReference type="SFLD" id="SFLDG00358">
    <property type="entry name" value="Main_(cytGST)"/>
    <property type="match status" value="1"/>
</dbReference>
<dbReference type="SMART" id="SM01183">
    <property type="entry name" value="EF1G"/>
    <property type="match status" value="1"/>
</dbReference>
<dbReference type="SUPFAM" id="SSF89942">
    <property type="entry name" value="eEF1-gamma domain"/>
    <property type="match status" value="1"/>
</dbReference>
<dbReference type="SUPFAM" id="SSF47616">
    <property type="entry name" value="GST C-terminal domain-like"/>
    <property type="match status" value="1"/>
</dbReference>
<dbReference type="SUPFAM" id="SSF52833">
    <property type="entry name" value="Thioredoxin-like"/>
    <property type="match status" value="1"/>
</dbReference>
<dbReference type="PROSITE" id="PS50040">
    <property type="entry name" value="EF1G_C"/>
    <property type="match status" value="1"/>
</dbReference>
<dbReference type="PROSITE" id="PS50405">
    <property type="entry name" value="GST_CTER"/>
    <property type="match status" value="1"/>
</dbReference>
<dbReference type="PROSITE" id="PS50404">
    <property type="entry name" value="GST_NTER"/>
    <property type="match status" value="1"/>
</dbReference>